<keyword id="KW-0963">Cytoplasm</keyword>
<keyword id="KW-0378">Hydrolase</keyword>
<keyword id="KW-0645">Protease</keyword>
<keyword id="KW-1185">Reference proteome</keyword>
<keyword id="KW-0788">Thiol protease</keyword>
<feature type="chain" id="PRO_1000050135" description="Pyrrolidone-carboxylate peptidase">
    <location>
        <begin position="1"/>
        <end position="216"/>
    </location>
</feature>
<feature type="active site" evidence="1">
    <location>
        <position position="80"/>
    </location>
</feature>
<feature type="active site" evidence="1">
    <location>
        <position position="143"/>
    </location>
</feature>
<feature type="active site" evidence="1">
    <location>
        <position position="168"/>
    </location>
</feature>
<accession>Q0KFE0</accession>
<protein>
    <recommendedName>
        <fullName evidence="1">Pyrrolidone-carboxylate peptidase</fullName>
        <ecNumber evidence="1">3.4.19.3</ecNumber>
    </recommendedName>
    <alternativeName>
        <fullName evidence="1">5-oxoprolyl-peptidase</fullName>
    </alternativeName>
    <alternativeName>
        <fullName evidence="1">Pyroglutamyl-peptidase I</fullName>
        <shortName evidence="1">PGP-I</shortName>
        <shortName evidence="1">Pyrase</shortName>
    </alternativeName>
</protein>
<gene>
    <name evidence="1" type="primary">pcp</name>
    <name type="ordered locus">H16_A0129</name>
</gene>
<comment type="function">
    <text evidence="1">Removes 5-oxoproline from various penultimate amino acid residues except L-proline.</text>
</comment>
<comment type="catalytic activity">
    <reaction evidence="1">
        <text>Release of an N-terminal pyroglutamyl group from a polypeptide, the second amino acid generally not being Pro.</text>
        <dbReference type="EC" id="3.4.19.3"/>
    </reaction>
</comment>
<comment type="subunit">
    <text evidence="1">Homotetramer.</text>
</comment>
<comment type="subcellular location">
    <subcellularLocation>
        <location evidence="1">Cytoplasm</location>
    </subcellularLocation>
</comment>
<comment type="similarity">
    <text evidence="1">Belongs to the peptidase C15 family.</text>
</comment>
<name>PCP_CUPNH</name>
<organism>
    <name type="scientific">Cupriavidus necator (strain ATCC 17699 / DSM 428 / KCTC 22496 / NCIMB 10442 / H16 / Stanier 337)</name>
    <name type="common">Ralstonia eutropha</name>
    <dbReference type="NCBI Taxonomy" id="381666"/>
    <lineage>
        <taxon>Bacteria</taxon>
        <taxon>Pseudomonadati</taxon>
        <taxon>Pseudomonadota</taxon>
        <taxon>Betaproteobacteria</taxon>
        <taxon>Burkholderiales</taxon>
        <taxon>Burkholderiaceae</taxon>
        <taxon>Cupriavidus</taxon>
    </lineage>
</organism>
<proteinExistence type="inferred from homology"/>
<evidence type="ECO:0000255" key="1">
    <source>
        <dbReference type="HAMAP-Rule" id="MF_00417"/>
    </source>
</evidence>
<sequence>MRTVLLTGFEPFENEPINPSWEAVRALDGERVGDAVIVARQLPCVFGAAIDTIGELVDVLRPALVIAVGQAGGRAEMSVERVAINVDDARIADNAGAQPIDTAIVAGGPAAYFATLPIKAMVRDMRAAGVPASVSQTAGTFVCNHVFYGLMHRLSQQPDGDVRGGFIHIPYLPEQAARHPGQPSLAQETLVKGLRAAVATALSTRADVREQGGQLH</sequence>
<dbReference type="EC" id="3.4.19.3" evidence="1"/>
<dbReference type="EMBL" id="AM260479">
    <property type="protein sequence ID" value="CAJ91281.1"/>
    <property type="molecule type" value="Genomic_DNA"/>
</dbReference>
<dbReference type="RefSeq" id="WP_010811495.1">
    <property type="nucleotide sequence ID" value="NZ_CP039287.1"/>
</dbReference>
<dbReference type="SMR" id="Q0KFE0"/>
<dbReference type="STRING" id="381666.H16_A0129"/>
<dbReference type="MEROPS" id="C15.001"/>
<dbReference type="KEGG" id="reh:H16_A0129"/>
<dbReference type="eggNOG" id="COG2039">
    <property type="taxonomic scope" value="Bacteria"/>
</dbReference>
<dbReference type="HOGENOM" id="CLU_043960_4_0_4"/>
<dbReference type="OrthoDB" id="9779738at2"/>
<dbReference type="Proteomes" id="UP000008210">
    <property type="component" value="Chromosome 1"/>
</dbReference>
<dbReference type="GO" id="GO:0005829">
    <property type="term" value="C:cytosol"/>
    <property type="evidence" value="ECO:0007669"/>
    <property type="project" value="InterPro"/>
</dbReference>
<dbReference type="GO" id="GO:0016920">
    <property type="term" value="F:pyroglutamyl-peptidase activity"/>
    <property type="evidence" value="ECO:0007669"/>
    <property type="project" value="UniProtKB-UniRule"/>
</dbReference>
<dbReference type="GO" id="GO:0006508">
    <property type="term" value="P:proteolysis"/>
    <property type="evidence" value="ECO:0007669"/>
    <property type="project" value="UniProtKB-KW"/>
</dbReference>
<dbReference type="CDD" id="cd00501">
    <property type="entry name" value="Peptidase_C15"/>
    <property type="match status" value="1"/>
</dbReference>
<dbReference type="FunFam" id="3.40.630.20:FF:000001">
    <property type="entry name" value="Pyrrolidone-carboxylate peptidase"/>
    <property type="match status" value="1"/>
</dbReference>
<dbReference type="Gene3D" id="3.40.630.20">
    <property type="entry name" value="Peptidase C15, pyroglutamyl peptidase I-like"/>
    <property type="match status" value="1"/>
</dbReference>
<dbReference type="HAMAP" id="MF_00417">
    <property type="entry name" value="Pyrrolid_peptidase"/>
    <property type="match status" value="1"/>
</dbReference>
<dbReference type="InterPro" id="IPR000816">
    <property type="entry name" value="Peptidase_C15"/>
</dbReference>
<dbReference type="InterPro" id="IPR016125">
    <property type="entry name" value="Peptidase_C15-like"/>
</dbReference>
<dbReference type="InterPro" id="IPR036440">
    <property type="entry name" value="Peptidase_C15-like_sf"/>
</dbReference>
<dbReference type="InterPro" id="IPR029762">
    <property type="entry name" value="PGP-I_bact-type"/>
</dbReference>
<dbReference type="InterPro" id="IPR033694">
    <property type="entry name" value="PGPEP1_Cys_AS"/>
</dbReference>
<dbReference type="NCBIfam" id="NF009676">
    <property type="entry name" value="PRK13197.1"/>
    <property type="match status" value="1"/>
</dbReference>
<dbReference type="NCBIfam" id="TIGR00504">
    <property type="entry name" value="pyro_pdase"/>
    <property type="match status" value="1"/>
</dbReference>
<dbReference type="PANTHER" id="PTHR23402">
    <property type="entry name" value="PROTEASE FAMILY C15 PYROGLUTAMYL-PEPTIDASE I-RELATED"/>
    <property type="match status" value="1"/>
</dbReference>
<dbReference type="PANTHER" id="PTHR23402:SF1">
    <property type="entry name" value="PYROGLUTAMYL-PEPTIDASE I"/>
    <property type="match status" value="1"/>
</dbReference>
<dbReference type="Pfam" id="PF01470">
    <property type="entry name" value="Peptidase_C15"/>
    <property type="match status" value="1"/>
</dbReference>
<dbReference type="PIRSF" id="PIRSF015592">
    <property type="entry name" value="Prld-crbxl_pptds"/>
    <property type="match status" value="1"/>
</dbReference>
<dbReference type="PRINTS" id="PR00706">
    <property type="entry name" value="PYROGLUPTASE"/>
</dbReference>
<dbReference type="SUPFAM" id="SSF53182">
    <property type="entry name" value="Pyrrolidone carboxyl peptidase (pyroglutamate aminopeptidase)"/>
    <property type="match status" value="1"/>
</dbReference>
<dbReference type="PROSITE" id="PS01334">
    <property type="entry name" value="PYRASE_CYS"/>
    <property type="match status" value="1"/>
</dbReference>
<reference key="1">
    <citation type="journal article" date="2006" name="Nat. Biotechnol.">
        <title>Genome sequence of the bioplastic-producing 'Knallgas' bacterium Ralstonia eutropha H16.</title>
        <authorList>
            <person name="Pohlmann A."/>
            <person name="Fricke W.F."/>
            <person name="Reinecke F."/>
            <person name="Kusian B."/>
            <person name="Liesegang H."/>
            <person name="Cramm R."/>
            <person name="Eitinger T."/>
            <person name="Ewering C."/>
            <person name="Poetter M."/>
            <person name="Schwartz E."/>
            <person name="Strittmatter A."/>
            <person name="Voss I."/>
            <person name="Gottschalk G."/>
            <person name="Steinbuechel A."/>
            <person name="Friedrich B."/>
            <person name="Bowien B."/>
        </authorList>
    </citation>
    <scope>NUCLEOTIDE SEQUENCE [LARGE SCALE GENOMIC DNA]</scope>
    <source>
        <strain>ATCC 17699 / DSM 428 / KCTC 22496 / NCIMB 10442 / H16 / Stanier 337</strain>
    </source>
</reference>